<name>BPIB3_RAT</name>
<organism>
    <name type="scientific">Rattus norvegicus</name>
    <name type="common">Rat</name>
    <dbReference type="NCBI Taxonomy" id="10116"/>
    <lineage>
        <taxon>Eukaryota</taxon>
        <taxon>Metazoa</taxon>
        <taxon>Chordata</taxon>
        <taxon>Craniata</taxon>
        <taxon>Vertebrata</taxon>
        <taxon>Euteleostomi</taxon>
        <taxon>Mammalia</taxon>
        <taxon>Eutheria</taxon>
        <taxon>Euarchontoglires</taxon>
        <taxon>Glires</taxon>
        <taxon>Rodentia</taxon>
        <taxon>Myomorpha</taxon>
        <taxon>Muroidea</taxon>
        <taxon>Muridae</taxon>
        <taxon>Murinae</taxon>
        <taxon>Rattus</taxon>
    </lineage>
</organism>
<sequence>MMPGVYALLLLWGLATPCLGLLETVGTLARIDKDELGKAIQNSLVGGPILQNVLGTVTSVNQGLLGAGGLLGGGGLLSYGGLFSLVEELSGLKIEELTLPTVSIKLLPGVGVQLSLHTKVSLHGSGPLVGLLQLAAEVNVSSKVALGMSPRGTPILILKRCNTLLGHISLTSGLLPTPIFGLVEQTLCKVLPGLLCPVVDSVLSVVNELLGATLSLVPLGPLGSVEFTLATLPLISNQYIELDINPIVKSIAGDVIDFPKPRLPVKMPPKEDHTSQVTVPLYLFNTVFGLLQTNGALDLDITPEMVPRNIPLTTTDLAALAPEALGKLPPGQHLLLSLRVMKSPMILLQNKKVTVSIPVTIHVLSSVPQGTPVALFQMNGVMTLNAHLVPSTTKLHISLSLERLTVQLASSFSQPFDASRLEEWLSDVVRAAYMQKLNEHLEVGIPLPKILNVNFANSVVDVIENAVVLTVAP</sequence>
<protein>
    <recommendedName>
        <fullName evidence="3">BPI fold-containing family B member 3</fullName>
    </recommendedName>
    <alternativeName>
        <fullName>Ligand-binding protein RYA3</fullName>
    </alternativeName>
    <alternativeName>
        <fullName>Long palate, lung and nasal epithelium carcinoma-associated protein 3</fullName>
    </alternativeName>
</protein>
<gene>
    <name evidence="4" type="primary">Bpifb3</name>
    <name type="synonym">Lplunc3</name>
    <name type="synonym">Rya3</name>
</gene>
<proteinExistence type="evidence at transcript level"/>
<keyword id="KW-1015">Disulfide bond</keyword>
<keyword id="KW-0325">Glycoprotein</keyword>
<keyword id="KW-1185">Reference proteome</keyword>
<keyword id="KW-0964">Secreted</keyword>
<keyword id="KW-0732">Signal</keyword>
<accession>Q05701</accession>
<dbReference type="EMBL" id="X60658">
    <property type="protein sequence ID" value="CAA43065.1"/>
    <property type="molecule type" value="mRNA"/>
</dbReference>
<dbReference type="RefSeq" id="XP_006235414.1">
    <property type="nucleotide sequence ID" value="XM_006235352.5"/>
</dbReference>
<dbReference type="SMR" id="Q05701"/>
<dbReference type="FunCoup" id="Q05701">
    <property type="interactions" value="9"/>
</dbReference>
<dbReference type="STRING" id="10116.ENSRNOP00000052216"/>
<dbReference type="GlyCosmos" id="Q05701">
    <property type="glycosylation" value="1 site, No reported glycans"/>
</dbReference>
<dbReference type="GlyGen" id="Q05701">
    <property type="glycosylation" value="1 site"/>
</dbReference>
<dbReference type="PhosphoSitePlus" id="Q05701"/>
<dbReference type="PaxDb" id="10116-ENSRNOP00000052216"/>
<dbReference type="GeneID" id="499924"/>
<dbReference type="UCSC" id="RGD:1565613">
    <property type="organism name" value="rat"/>
</dbReference>
<dbReference type="AGR" id="RGD:1565613"/>
<dbReference type="CTD" id="359710"/>
<dbReference type="RGD" id="1565613">
    <property type="gene designation" value="Bpifb3"/>
</dbReference>
<dbReference type="eggNOG" id="KOG4160">
    <property type="taxonomic scope" value="Eukaryota"/>
</dbReference>
<dbReference type="HOGENOM" id="CLU_031635_1_0_1"/>
<dbReference type="InParanoid" id="Q05701"/>
<dbReference type="OrthoDB" id="9905567at2759"/>
<dbReference type="PhylomeDB" id="Q05701"/>
<dbReference type="TreeFam" id="TF315617"/>
<dbReference type="PRO" id="PR:Q05701"/>
<dbReference type="Proteomes" id="UP000002494">
    <property type="component" value="Unplaced"/>
</dbReference>
<dbReference type="GO" id="GO:0005737">
    <property type="term" value="C:cytoplasm"/>
    <property type="evidence" value="ECO:0000250"/>
    <property type="project" value="UniProtKB"/>
</dbReference>
<dbReference type="GO" id="GO:0005576">
    <property type="term" value="C:extracellular region"/>
    <property type="evidence" value="ECO:0007669"/>
    <property type="project" value="UniProtKB-SubCell"/>
</dbReference>
<dbReference type="GO" id="GO:0008289">
    <property type="term" value="F:lipid binding"/>
    <property type="evidence" value="ECO:0007669"/>
    <property type="project" value="InterPro"/>
</dbReference>
<dbReference type="GO" id="GO:0005549">
    <property type="term" value="F:odorant binding"/>
    <property type="evidence" value="ECO:0000303"/>
    <property type="project" value="UniProtKB"/>
</dbReference>
<dbReference type="FunFam" id="3.15.20.10:FF:000003">
    <property type="entry name" value="BPI fold-containing family B member 3"/>
    <property type="match status" value="1"/>
</dbReference>
<dbReference type="Gene3D" id="3.15.10.10">
    <property type="entry name" value="Bactericidal permeability-increasing protein, domain 1"/>
    <property type="match status" value="1"/>
</dbReference>
<dbReference type="Gene3D" id="3.15.20.10">
    <property type="entry name" value="Bactericidal permeability-increasing protein, domain 2"/>
    <property type="match status" value="1"/>
</dbReference>
<dbReference type="InterPro" id="IPR017943">
    <property type="entry name" value="Bactericidal_perm-incr_a/b_dom"/>
</dbReference>
<dbReference type="InterPro" id="IPR051660">
    <property type="entry name" value="BPI_fold-BPI/LBP"/>
</dbReference>
<dbReference type="InterPro" id="IPR001124">
    <property type="entry name" value="Lipid-bd_serum_glycop_C"/>
</dbReference>
<dbReference type="InterPro" id="IPR017942">
    <property type="entry name" value="Lipid-bd_serum_glycop_N"/>
</dbReference>
<dbReference type="PANTHER" id="PTHR46019:SF5">
    <property type="entry name" value="BPI FOLD-CONTAINING FAMILY B MEMBER 3"/>
    <property type="match status" value="1"/>
</dbReference>
<dbReference type="PANTHER" id="PTHR46019">
    <property type="entry name" value="BPI FOLD-CONTAINING FAMILY B MEMBER 4-RELATED"/>
    <property type="match status" value="1"/>
</dbReference>
<dbReference type="Pfam" id="PF01273">
    <property type="entry name" value="LBP_BPI_CETP"/>
    <property type="match status" value="1"/>
</dbReference>
<dbReference type="Pfam" id="PF02886">
    <property type="entry name" value="LBP_BPI_CETP_C"/>
    <property type="match status" value="1"/>
</dbReference>
<dbReference type="SMART" id="SM00328">
    <property type="entry name" value="BPI1"/>
    <property type="match status" value="1"/>
</dbReference>
<dbReference type="SMART" id="SM00329">
    <property type="entry name" value="BPI2"/>
    <property type="match status" value="1"/>
</dbReference>
<dbReference type="SUPFAM" id="SSF55394">
    <property type="entry name" value="Bactericidal permeability-increasing protein, BPI"/>
    <property type="match status" value="2"/>
</dbReference>
<feature type="signal peptide" evidence="2">
    <location>
        <begin position="1"/>
        <end position="20"/>
    </location>
</feature>
<feature type="chain" id="PRO_0000017172" description="BPI fold-containing family B member 3">
    <location>
        <begin position="21"/>
        <end position="473"/>
    </location>
</feature>
<feature type="glycosylation site" description="N-linked (GlcNAc...) asparagine" evidence="2">
    <location>
        <position position="139"/>
    </location>
</feature>
<feature type="disulfide bond" evidence="1">
    <location>
        <begin position="161"/>
        <end position="196"/>
    </location>
</feature>
<comment type="function">
    <text>May have the capacity to recognize and bind specific classes of odorants. May act as a carrier molecule, transporting odorants across the mucus layer to access receptor sites. May serve as a primary defense mechanism by recognizing and removing potentially harmful odorants or pathogenic microorganisms from the mucosa or clearing excess odorant from mucus to enable new odorant stimuli to be received.</text>
</comment>
<comment type="subcellular location">
    <subcellularLocation>
        <location evidence="1">Secreted</location>
    </subcellularLocation>
</comment>
<comment type="tissue specificity">
    <text>Highly expressed in olfactory mucosa but undetectable in thymus, kidney, lung, brain, spleen and liver.</text>
</comment>
<comment type="similarity">
    <text evidence="3">Belongs to the BPI/LBP/Plunc superfamily. BPI/LBP family.</text>
</comment>
<reference key="1">
    <citation type="journal article" date="1991" name="EMBO J.">
        <title>Novel genes for potential ligand-binding proteins in subregions of the olfactory mucosa.</title>
        <authorList>
            <person name="Dear T.N."/>
            <person name="Boehm T."/>
            <person name="Keverne E.B."/>
            <person name="Rabbitts T.H."/>
        </authorList>
    </citation>
    <scope>NUCLEOTIDE SEQUENCE [MRNA]</scope>
    <source>
        <strain>Fischer</strain>
        <tissue>Olfactory epithelium</tissue>
    </source>
</reference>
<evidence type="ECO:0000250" key="1"/>
<evidence type="ECO:0000255" key="2"/>
<evidence type="ECO:0000305" key="3"/>
<evidence type="ECO:0000312" key="4">
    <source>
        <dbReference type="RGD" id="1565613"/>
    </source>
</evidence>